<reference key="1">
    <citation type="journal article" date="2005" name="J. Bacteriol.">
        <title>Insights on evolution of virulence and resistance from the complete genome analysis of an early methicillin-resistant Staphylococcus aureus strain and a biofilm-producing methicillin-resistant Staphylococcus epidermidis strain.</title>
        <authorList>
            <person name="Gill S.R."/>
            <person name="Fouts D.E."/>
            <person name="Archer G.L."/>
            <person name="Mongodin E.F."/>
            <person name="DeBoy R.T."/>
            <person name="Ravel J."/>
            <person name="Paulsen I.T."/>
            <person name="Kolonay J.F."/>
            <person name="Brinkac L.M."/>
            <person name="Beanan M.J."/>
            <person name="Dodson R.J."/>
            <person name="Daugherty S.C."/>
            <person name="Madupu R."/>
            <person name="Angiuoli S.V."/>
            <person name="Durkin A.S."/>
            <person name="Haft D.H."/>
            <person name="Vamathevan J.J."/>
            <person name="Khouri H."/>
            <person name="Utterback T.R."/>
            <person name="Lee C."/>
            <person name="Dimitrov G."/>
            <person name="Jiang L."/>
            <person name="Qin H."/>
            <person name="Weidman J."/>
            <person name="Tran K."/>
            <person name="Kang K.H."/>
            <person name="Hance I.R."/>
            <person name="Nelson K.E."/>
            <person name="Fraser C.M."/>
        </authorList>
    </citation>
    <scope>NUCLEOTIDE SEQUENCE [LARGE SCALE GENOMIC DNA]</scope>
    <source>
        <strain>COL</strain>
    </source>
</reference>
<organism>
    <name type="scientific">Staphylococcus aureus (strain COL)</name>
    <dbReference type="NCBI Taxonomy" id="93062"/>
    <lineage>
        <taxon>Bacteria</taxon>
        <taxon>Bacillati</taxon>
        <taxon>Bacillota</taxon>
        <taxon>Bacilli</taxon>
        <taxon>Bacillales</taxon>
        <taxon>Staphylococcaceae</taxon>
        <taxon>Staphylococcus</taxon>
    </lineage>
</organism>
<feature type="chain" id="PRO_0000187898" description="Thiol peroxidase">
    <location>
        <begin position="1"/>
        <end position="164"/>
    </location>
</feature>
<feature type="domain" description="Thioredoxin" evidence="1">
    <location>
        <begin position="18"/>
        <end position="163"/>
    </location>
</feature>
<feature type="active site" description="Cysteine sulfenic acid (-SOH) intermediate" evidence="1">
    <location>
        <position position="60"/>
    </location>
</feature>
<feature type="disulfide bond" description="Redox-active" evidence="1">
    <location>
        <begin position="60"/>
        <end position="93"/>
    </location>
</feature>
<dbReference type="EC" id="1.11.1.24" evidence="1"/>
<dbReference type="EMBL" id="CP000046">
    <property type="protein sequence ID" value="AAW38291.1"/>
    <property type="molecule type" value="Genomic_DNA"/>
</dbReference>
<dbReference type="RefSeq" id="WP_000136253.1">
    <property type="nucleotide sequence ID" value="NZ_JBGOFO010000008.1"/>
</dbReference>
<dbReference type="SMR" id="Q5HF61"/>
<dbReference type="PeroxiBase" id="6010">
    <property type="entry name" value="SaurTPx_MW2"/>
</dbReference>
<dbReference type="KEGG" id="sac:SACOL1762"/>
<dbReference type="HOGENOM" id="CLU_042529_12_0_9"/>
<dbReference type="Proteomes" id="UP000000530">
    <property type="component" value="Chromosome"/>
</dbReference>
<dbReference type="GO" id="GO:0008379">
    <property type="term" value="F:thioredoxin peroxidase activity"/>
    <property type="evidence" value="ECO:0007669"/>
    <property type="project" value="UniProtKB-UniRule"/>
</dbReference>
<dbReference type="CDD" id="cd03014">
    <property type="entry name" value="PRX_Atyp2cys"/>
    <property type="match status" value="1"/>
</dbReference>
<dbReference type="Gene3D" id="3.40.30.10">
    <property type="entry name" value="Glutaredoxin"/>
    <property type="match status" value="1"/>
</dbReference>
<dbReference type="HAMAP" id="MF_00269">
    <property type="entry name" value="Tpx"/>
    <property type="match status" value="1"/>
</dbReference>
<dbReference type="InterPro" id="IPR013740">
    <property type="entry name" value="Redoxin"/>
</dbReference>
<dbReference type="InterPro" id="IPR036249">
    <property type="entry name" value="Thioredoxin-like_sf"/>
</dbReference>
<dbReference type="InterPro" id="IPR013766">
    <property type="entry name" value="Thioredoxin_domain"/>
</dbReference>
<dbReference type="InterPro" id="IPR002065">
    <property type="entry name" value="TPX"/>
</dbReference>
<dbReference type="InterPro" id="IPR018219">
    <property type="entry name" value="Tpx_CS"/>
</dbReference>
<dbReference type="InterPro" id="IPR050455">
    <property type="entry name" value="Tpx_Peroxidase_subfamily"/>
</dbReference>
<dbReference type="NCBIfam" id="NF001808">
    <property type="entry name" value="PRK00522.1"/>
    <property type="match status" value="1"/>
</dbReference>
<dbReference type="PANTHER" id="PTHR43110">
    <property type="entry name" value="THIOL PEROXIDASE"/>
    <property type="match status" value="1"/>
</dbReference>
<dbReference type="PANTHER" id="PTHR43110:SF1">
    <property type="entry name" value="THIOL PEROXIDASE"/>
    <property type="match status" value="1"/>
</dbReference>
<dbReference type="Pfam" id="PF08534">
    <property type="entry name" value="Redoxin"/>
    <property type="match status" value="1"/>
</dbReference>
<dbReference type="SUPFAM" id="SSF52833">
    <property type="entry name" value="Thioredoxin-like"/>
    <property type="match status" value="1"/>
</dbReference>
<dbReference type="PROSITE" id="PS51352">
    <property type="entry name" value="THIOREDOXIN_2"/>
    <property type="match status" value="1"/>
</dbReference>
<dbReference type="PROSITE" id="PS01265">
    <property type="entry name" value="TPX"/>
    <property type="match status" value="1"/>
</dbReference>
<proteinExistence type="inferred from homology"/>
<name>TPX_STAAC</name>
<gene>
    <name evidence="1" type="primary">tpx</name>
    <name type="ordered locus">SACOL1762</name>
</gene>
<sequence length="164" mass="18005">MTEITFKGGPIHLKGQQINEGDFAPDFTVLDNDLNQVTLADYAGKKKLISVVPSIDTGVCDQQTRKFNSDASKEEGIVLTISADLPFAQKRWCASAGLDNVITLSDHRDLSFGENYGVVMEELRLLARAVFVLDADNKVVYKEIVSEGTDFPDFDAALAAYKNI</sequence>
<protein>
    <recommendedName>
        <fullName evidence="1">Thiol peroxidase</fullName>
        <shortName evidence="1">Tpx</shortName>
        <ecNumber evidence="1">1.11.1.24</ecNumber>
    </recommendedName>
    <alternativeName>
        <fullName evidence="1">Peroxiredoxin tpx</fullName>
        <shortName evidence="1">Prx</shortName>
    </alternativeName>
    <alternativeName>
        <fullName evidence="1">Thioredoxin peroxidase</fullName>
    </alternativeName>
    <alternativeName>
        <fullName evidence="1">Thioredoxin-dependent peroxiredoxin</fullName>
    </alternativeName>
</protein>
<evidence type="ECO:0000255" key="1">
    <source>
        <dbReference type="HAMAP-Rule" id="MF_00269"/>
    </source>
</evidence>
<accession>Q5HF61</accession>
<comment type="function">
    <text evidence="1">Thiol-specific peroxidase that catalyzes the reduction of hydrogen peroxide and organic hydroperoxides to water and alcohols, respectively. Plays a role in cell protection against oxidative stress by detoxifying peroxides.</text>
</comment>
<comment type="catalytic activity">
    <reaction evidence="1">
        <text>a hydroperoxide + [thioredoxin]-dithiol = an alcohol + [thioredoxin]-disulfide + H2O</text>
        <dbReference type="Rhea" id="RHEA:62620"/>
        <dbReference type="Rhea" id="RHEA-COMP:10698"/>
        <dbReference type="Rhea" id="RHEA-COMP:10700"/>
        <dbReference type="ChEBI" id="CHEBI:15377"/>
        <dbReference type="ChEBI" id="CHEBI:29950"/>
        <dbReference type="ChEBI" id="CHEBI:30879"/>
        <dbReference type="ChEBI" id="CHEBI:35924"/>
        <dbReference type="ChEBI" id="CHEBI:50058"/>
        <dbReference type="EC" id="1.11.1.24"/>
    </reaction>
</comment>
<comment type="subunit">
    <text evidence="1">Homodimer.</text>
</comment>
<comment type="miscellaneous">
    <text evidence="1">The active site is a conserved redox-active cysteine residue, the peroxidatic cysteine (C(P)), which makes the nucleophilic attack on the peroxide substrate. The peroxide oxidizes the C(P)-SH to cysteine sulfenic acid (C(P)-SOH), which then reacts with another cysteine residue, the resolving cysteine (C(R)), to form a disulfide bridge. The disulfide is subsequently reduced by an appropriate electron donor to complete the catalytic cycle. In this atypical 2-Cys peroxiredoxin, C(R) is present in the same subunit to form an intramolecular disulfide. The disulfide is subsequently reduced by thioredoxin.</text>
</comment>
<comment type="similarity">
    <text evidence="1">Belongs to the peroxiredoxin family. Tpx subfamily.</text>
</comment>
<keyword id="KW-0049">Antioxidant</keyword>
<keyword id="KW-1015">Disulfide bond</keyword>
<keyword id="KW-0560">Oxidoreductase</keyword>
<keyword id="KW-0575">Peroxidase</keyword>
<keyword id="KW-0676">Redox-active center</keyword>